<feature type="chain" id="PRO_0000181593" description="Large ribosomal subunit protein bL25">
    <location>
        <begin position="1"/>
        <end position="217"/>
    </location>
</feature>
<feature type="region of interest" description="Disordered" evidence="2">
    <location>
        <begin position="178"/>
        <end position="217"/>
    </location>
</feature>
<feature type="compositionally biased region" description="Acidic residues" evidence="2">
    <location>
        <begin position="184"/>
        <end position="205"/>
    </location>
</feature>
<feature type="compositionally biased region" description="Basic and acidic residues" evidence="2">
    <location>
        <begin position="206"/>
        <end position="217"/>
    </location>
</feature>
<accession>Q99WA2</accession>
<protein>
    <recommendedName>
        <fullName evidence="1">Large ribosomal subunit protein bL25</fullName>
    </recommendedName>
    <alternativeName>
        <fullName evidence="3">50S ribosomal protein L25</fullName>
    </alternativeName>
    <alternativeName>
        <fullName evidence="1">General stress protein CTC</fullName>
    </alternativeName>
</protein>
<gene>
    <name evidence="1" type="primary">rplY</name>
    <name evidence="1" type="synonym">ctc</name>
    <name type="ordered locus">SAV0501</name>
</gene>
<organism>
    <name type="scientific">Staphylococcus aureus (strain Mu50 / ATCC 700699)</name>
    <dbReference type="NCBI Taxonomy" id="158878"/>
    <lineage>
        <taxon>Bacteria</taxon>
        <taxon>Bacillati</taxon>
        <taxon>Bacillota</taxon>
        <taxon>Bacilli</taxon>
        <taxon>Bacillales</taxon>
        <taxon>Staphylococcaceae</taxon>
        <taxon>Staphylococcus</taxon>
    </lineage>
</organism>
<reference key="1">
    <citation type="journal article" date="2001" name="Lancet">
        <title>Whole genome sequencing of meticillin-resistant Staphylococcus aureus.</title>
        <authorList>
            <person name="Kuroda M."/>
            <person name="Ohta T."/>
            <person name="Uchiyama I."/>
            <person name="Baba T."/>
            <person name="Yuzawa H."/>
            <person name="Kobayashi I."/>
            <person name="Cui L."/>
            <person name="Oguchi A."/>
            <person name="Aoki K."/>
            <person name="Nagai Y."/>
            <person name="Lian J.-Q."/>
            <person name="Ito T."/>
            <person name="Kanamori M."/>
            <person name="Matsumaru H."/>
            <person name="Maruyama A."/>
            <person name="Murakami H."/>
            <person name="Hosoyama A."/>
            <person name="Mizutani-Ui Y."/>
            <person name="Takahashi N.K."/>
            <person name="Sawano T."/>
            <person name="Inoue R."/>
            <person name="Kaito C."/>
            <person name="Sekimizu K."/>
            <person name="Hirakawa H."/>
            <person name="Kuhara S."/>
            <person name="Goto S."/>
            <person name="Yabuzaki J."/>
            <person name="Kanehisa M."/>
            <person name="Yamashita A."/>
            <person name="Oshima K."/>
            <person name="Furuya K."/>
            <person name="Yoshino C."/>
            <person name="Shiba T."/>
            <person name="Hattori M."/>
            <person name="Ogasawara N."/>
            <person name="Hayashi H."/>
            <person name="Hiramatsu K."/>
        </authorList>
    </citation>
    <scope>NUCLEOTIDE SEQUENCE [LARGE SCALE GENOMIC DNA]</scope>
    <source>
        <strain>Mu50 / ATCC 700699</strain>
    </source>
</reference>
<dbReference type="EMBL" id="BA000017">
    <property type="protein sequence ID" value="BAB56663.1"/>
    <property type="molecule type" value="Genomic_DNA"/>
</dbReference>
<dbReference type="RefSeq" id="WP_000157650.1">
    <property type="nucleotide sequence ID" value="NC_002758.2"/>
</dbReference>
<dbReference type="SMR" id="Q99WA2"/>
<dbReference type="KEGG" id="sav:SAV0501"/>
<dbReference type="HOGENOM" id="CLU_075939_2_1_9"/>
<dbReference type="PhylomeDB" id="Q99WA2"/>
<dbReference type="Proteomes" id="UP000002481">
    <property type="component" value="Chromosome"/>
</dbReference>
<dbReference type="GO" id="GO:0022625">
    <property type="term" value="C:cytosolic large ribosomal subunit"/>
    <property type="evidence" value="ECO:0007669"/>
    <property type="project" value="TreeGrafter"/>
</dbReference>
<dbReference type="GO" id="GO:0008097">
    <property type="term" value="F:5S rRNA binding"/>
    <property type="evidence" value="ECO:0007669"/>
    <property type="project" value="InterPro"/>
</dbReference>
<dbReference type="GO" id="GO:0003735">
    <property type="term" value="F:structural constituent of ribosome"/>
    <property type="evidence" value="ECO:0007669"/>
    <property type="project" value="InterPro"/>
</dbReference>
<dbReference type="GO" id="GO:0006412">
    <property type="term" value="P:translation"/>
    <property type="evidence" value="ECO:0007669"/>
    <property type="project" value="UniProtKB-UniRule"/>
</dbReference>
<dbReference type="CDD" id="cd00495">
    <property type="entry name" value="Ribosomal_L25_TL5_CTC"/>
    <property type="match status" value="1"/>
</dbReference>
<dbReference type="FunFam" id="2.40.240.10:FF:000013">
    <property type="entry name" value="50S ribosomal protein L25"/>
    <property type="match status" value="1"/>
</dbReference>
<dbReference type="Gene3D" id="2.170.120.20">
    <property type="entry name" value="Ribosomal protein L25, beta domain"/>
    <property type="match status" value="1"/>
</dbReference>
<dbReference type="Gene3D" id="2.40.240.10">
    <property type="entry name" value="Ribosomal Protein L25, Chain P"/>
    <property type="match status" value="1"/>
</dbReference>
<dbReference type="HAMAP" id="MF_01334">
    <property type="entry name" value="Ribosomal_bL25_CTC"/>
    <property type="match status" value="1"/>
</dbReference>
<dbReference type="InterPro" id="IPR020056">
    <property type="entry name" value="Rbsml_bL25/Gln-tRNA_synth_N"/>
</dbReference>
<dbReference type="InterPro" id="IPR011035">
    <property type="entry name" value="Ribosomal_bL25/Gln-tRNA_synth"/>
</dbReference>
<dbReference type="InterPro" id="IPR020057">
    <property type="entry name" value="Ribosomal_bL25_b-dom"/>
</dbReference>
<dbReference type="InterPro" id="IPR037121">
    <property type="entry name" value="Ribosomal_bL25_C"/>
</dbReference>
<dbReference type="InterPro" id="IPR001021">
    <property type="entry name" value="Ribosomal_bL25_long"/>
</dbReference>
<dbReference type="InterPro" id="IPR029751">
    <property type="entry name" value="Ribosomal_L25_dom"/>
</dbReference>
<dbReference type="InterPro" id="IPR020930">
    <property type="entry name" value="Ribosomal_uL5_bac-type"/>
</dbReference>
<dbReference type="NCBIfam" id="TIGR00731">
    <property type="entry name" value="bL25_bact_ctc"/>
    <property type="match status" value="1"/>
</dbReference>
<dbReference type="NCBIfam" id="NF004133">
    <property type="entry name" value="PRK05618.2-4"/>
    <property type="match status" value="1"/>
</dbReference>
<dbReference type="NCBIfam" id="NF004134">
    <property type="entry name" value="PRK05618.2-5"/>
    <property type="match status" value="1"/>
</dbReference>
<dbReference type="PANTHER" id="PTHR33284">
    <property type="entry name" value="RIBOSOMAL PROTEIN L25/GLN-TRNA SYNTHETASE, ANTI-CODON-BINDING DOMAIN-CONTAINING PROTEIN"/>
    <property type="match status" value="1"/>
</dbReference>
<dbReference type="PANTHER" id="PTHR33284:SF1">
    <property type="entry name" value="RIBOSOMAL PROTEIN L25_GLN-TRNA SYNTHETASE, ANTI-CODON-BINDING DOMAIN-CONTAINING PROTEIN"/>
    <property type="match status" value="1"/>
</dbReference>
<dbReference type="Pfam" id="PF01386">
    <property type="entry name" value="Ribosomal_L25p"/>
    <property type="match status" value="1"/>
</dbReference>
<dbReference type="Pfam" id="PF14693">
    <property type="entry name" value="Ribosomal_TL5_C"/>
    <property type="match status" value="1"/>
</dbReference>
<dbReference type="SUPFAM" id="SSF50715">
    <property type="entry name" value="Ribosomal protein L25-like"/>
    <property type="match status" value="1"/>
</dbReference>
<name>RL25_STAAM</name>
<sequence>MASLKSIIRQGKQTRSDLKQLRKSGKVPAVVYGYGTKNVSVKVDEVEFIKVIREVGRNGVIELGVGSKTIKVMVADYQFDPLKNQITHIDFLAINMSEERTVEVPVQLVGEAVGAKEGGVVEQPLFNLEVTATPDNIPEAIEVDITELNINDSLTVADVKVTGDFKIENDSAESVVTVVAPTEEPTEEEIEAMEGEQQTEEPEVVGESKEDEEKTEE</sequence>
<keyword id="KW-0687">Ribonucleoprotein</keyword>
<keyword id="KW-0689">Ribosomal protein</keyword>
<keyword id="KW-0694">RNA-binding</keyword>
<keyword id="KW-0699">rRNA-binding</keyword>
<proteinExistence type="inferred from homology"/>
<evidence type="ECO:0000255" key="1">
    <source>
        <dbReference type="HAMAP-Rule" id="MF_01334"/>
    </source>
</evidence>
<evidence type="ECO:0000256" key="2">
    <source>
        <dbReference type="SAM" id="MobiDB-lite"/>
    </source>
</evidence>
<evidence type="ECO:0000305" key="3"/>
<comment type="function">
    <text evidence="1">This is one of the proteins that binds to the 5S RNA in the ribosome where it forms part of the central protuberance.</text>
</comment>
<comment type="subunit">
    <text evidence="1">Part of the 50S ribosomal subunit; part of the 5S rRNA/L5/L18/L25 subcomplex. Contacts the 5S rRNA. Binds to the 5S rRNA independently of L5 and L18.</text>
</comment>
<comment type="similarity">
    <text evidence="1">Belongs to the bacterial ribosomal protein bL25 family. CTC subfamily.</text>
</comment>